<evidence type="ECO:0000255" key="1">
    <source>
        <dbReference type="HAMAP-Rule" id="MF_00175"/>
    </source>
</evidence>
<evidence type="ECO:0000255" key="2">
    <source>
        <dbReference type="PROSITE-ProRule" id="PRU01250"/>
    </source>
</evidence>
<name>CLPX_CLOD6</name>
<keyword id="KW-0067">ATP-binding</keyword>
<keyword id="KW-0143">Chaperone</keyword>
<keyword id="KW-0479">Metal-binding</keyword>
<keyword id="KW-0547">Nucleotide-binding</keyword>
<keyword id="KW-1185">Reference proteome</keyword>
<keyword id="KW-0862">Zinc</keyword>
<sequence>MSKYEEKRQLKCSFCGKNQDQVRRLIAGPNVYICDECVELCDEIIQEEIEDTIDEDTTSLPKPKEMMEILNDYVIGQEKAKKALSVAVYNHYKRIYSKKSSSKDIEIQKSNILLLGPTGSGKTLLAQTLARTLNVPFAMADATSLTEAGYVGEDVENILLKLIQAADFDIEKAERGIIYIDEIDKIARKSENPSITRDVSGEGVQQALLKILEGTVANVPPQGGRKHPHQEFLKIDTTNVLFILGGAFDGLEKIIQKRGGDKTLGFGAKIESKKELDLGKLYEKVLPEDLLKYGIIPEFIGRIPVLATLELLDEDALMQILQEPKNALVKQYKKLLELDDVELEFEEGALRAIAKKAIERNTGARGLRSIVESVMMETMFEVPSRDNIKKVIVTEKSVNEDSVNPIIVLKDQEESA</sequence>
<reference key="1">
    <citation type="journal article" date="2006" name="Nat. Genet.">
        <title>The multidrug-resistant human pathogen Clostridium difficile has a highly mobile, mosaic genome.</title>
        <authorList>
            <person name="Sebaihia M."/>
            <person name="Wren B.W."/>
            <person name="Mullany P."/>
            <person name="Fairweather N.F."/>
            <person name="Minton N."/>
            <person name="Stabler R."/>
            <person name="Thomson N.R."/>
            <person name="Roberts A.P."/>
            <person name="Cerdeno-Tarraga A.M."/>
            <person name="Wang H."/>
            <person name="Holden M.T.G."/>
            <person name="Wright A."/>
            <person name="Churcher C."/>
            <person name="Quail M.A."/>
            <person name="Baker S."/>
            <person name="Bason N."/>
            <person name="Brooks K."/>
            <person name="Chillingworth T."/>
            <person name="Cronin A."/>
            <person name="Davis P."/>
            <person name="Dowd L."/>
            <person name="Fraser A."/>
            <person name="Feltwell T."/>
            <person name="Hance Z."/>
            <person name="Holroyd S."/>
            <person name="Jagels K."/>
            <person name="Moule S."/>
            <person name="Mungall K."/>
            <person name="Price C."/>
            <person name="Rabbinowitsch E."/>
            <person name="Sharp S."/>
            <person name="Simmonds M."/>
            <person name="Stevens K."/>
            <person name="Unwin L."/>
            <person name="Whithead S."/>
            <person name="Dupuy B."/>
            <person name="Dougan G."/>
            <person name="Barrell B."/>
            <person name="Parkhill J."/>
        </authorList>
    </citation>
    <scope>NUCLEOTIDE SEQUENCE [LARGE SCALE GENOMIC DNA]</scope>
    <source>
        <strain>630</strain>
    </source>
</reference>
<dbReference type="EMBL" id="AM180355">
    <property type="protein sequence ID" value="CAJ70201.1"/>
    <property type="molecule type" value="Genomic_DNA"/>
</dbReference>
<dbReference type="RefSeq" id="WP_003417105.1">
    <property type="nucleotide sequence ID" value="NZ_JAUPES010000002.1"/>
</dbReference>
<dbReference type="RefSeq" id="YP_001089820.1">
    <property type="nucleotide sequence ID" value="NC_009089.1"/>
</dbReference>
<dbReference type="SMR" id="Q180E8"/>
<dbReference type="STRING" id="272563.CD630_33040"/>
<dbReference type="EnsemblBacteria" id="CAJ70201">
    <property type="protein sequence ID" value="CAJ70201"/>
    <property type="gene ID" value="CD630_33040"/>
</dbReference>
<dbReference type="GeneID" id="66355798"/>
<dbReference type="KEGG" id="cdf:CD630_33040"/>
<dbReference type="KEGG" id="pdc:CDIF630_03605"/>
<dbReference type="PATRIC" id="fig|272563.120.peg.3489"/>
<dbReference type="eggNOG" id="COG1219">
    <property type="taxonomic scope" value="Bacteria"/>
</dbReference>
<dbReference type="OrthoDB" id="9804062at2"/>
<dbReference type="PhylomeDB" id="Q180E8"/>
<dbReference type="BioCyc" id="PDIF272563:G12WB-3471-MONOMER"/>
<dbReference type="Proteomes" id="UP000001978">
    <property type="component" value="Chromosome"/>
</dbReference>
<dbReference type="GO" id="GO:0009376">
    <property type="term" value="C:HslUV protease complex"/>
    <property type="evidence" value="ECO:0007669"/>
    <property type="project" value="TreeGrafter"/>
</dbReference>
<dbReference type="GO" id="GO:0005524">
    <property type="term" value="F:ATP binding"/>
    <property type="evidence" value="ECO:0007669"/>
    <property type="project" value="UniProtKB-UniRule"/>
</dbReference>
<dbReference type="GO" id="GO:0016887">
    <property type="term" value="F:ATP hydrolysis activity"/>
    <property type="evidence" value="ECO:0007669"/>
    <property type="project" value="InterPro"/>
</dbReference>
<dbReference type="GO" id="GO:0140662">
    <property type="term" value="F:ATP-dependent protein folding chaperone"/>
    <property type="evidence" value="ECO:0007669"/>
    <property type="project" value="InterPro"/>
</dbReference>
<dbReference type="GO" id="GO:0046983">
    <property type="term" value="F:protein dimerization activity"/>
    <property type="evidence" value="ECO:0007669"/>
    <property type="project" value="InterPro"/>
</dbReference>
<dbReference type="GO" id="GO:0051082">
    <property type="term" value="F:unfolded protein binding"/>
    <property type="evidence" value="ECO:0007669"/>
    <property type="project" value="UniProtKB-UniRule"/>
</dbReference>
<dbReference type="GO" id="GO:0008270">
    <property type="term" value="F:zinc ion binding"/>
    <property type="evidence" value="ECO:0007669"/>
    <property type="project" value="InterPro"/>
</dbReference>
<dbReference type="GO" id="GO:0051301">
    <property type="term" value="P:cell division"/>
    <property type="evidence" value="ECO:0007669"/>
    <property type="project" value="TreeGrafter"/>
</dbReference>
<dbReference type="GO" id="GO:0051603">
    <property type="term" value="P:proteolysis involved in protein catabolic process"/>
    <property type="evidence" value="ECO:0007669"/>
    <property type="project" value="TreeGrafter"/>
</dbReference>
<dbReference type="CDD" id="cd19497">
    <property type="entry name" value="RecA-like_ClpX"/>
    <property type="match status" value="1"/>
</dbReference>
<dbReference type="FunFam" id="1.10.8.60:FF:000002">
    <property type="entry name" value="ATP-dependent Clp protease ATP-binding subunit ClpX"/>
    <property type="match status" value="1"/>
</dbReference>
<dbReference type="FunFam" id="3.40.50.300:FF:000005">
    <property type="entry name" value="ATP-dependent Clp protease ATP-binding subunit ClpX"/>
    <property type="match status" value="1"/>
</dbReference>
<dbReference type="Gene3D" id="1.10.8.60">
    <property type="match status" value="1"/>
</dbReference>
<dbReference type="Gene3D" id="6.20.220.10">
    <property type="entry name" value="ClpX chaperone, C4-type zinc finger domain"/>
    <property type="match status" value="1"/>
</dbReference>
<dbReference type="Gene3D" id="3.40.50.300">
    <property type="entry name" value="P-loop containing nucleotide triphosphate hydrolases"/>
    <property type="match status" value="1"/>
</dbReference>
<dbReference type="HAMAP" id="MF_00175">
    <property type="entry name" value="ClpX"/>
    <property type="match status" value="1"/>
</dbReference>
<dbReference type="InterPro" id="IPR003593">
    <property type="entry name" value="AAA+_ATPase"/>
</dbReference>
<dbReference type="InterPro" id="IPR050052">
    <property type="entry name" value="ATP-dep_Clp_protease_ClpX"/>
</dbReference>
<dbReference type="InterPro" id="IPR003959">
    <property type="entry name" value="ATPase_AAA_core"/>
</dbReference>
<dbReference type="InterPro" id="IPR019489">
    <property type="entry name" value="Clp_ATPase_C"/>
</dbReference>
<dbReference type="InterPro" id="IPR004487">
    <property type="entry name" value="Clp_protease_ATP-bd_su_ClpX"/>
</dbReference>
<dbReference type="InterPro" id="IPR046425">
    <property type="entry name" value="ClpX_bact"/>
</dbReference>
<dbReference type="InterPro" id="IPR027417">
    <property type="entry name" value="P-loop_NTPase"/>
</dbReference>
<dbReference type="InterPro" id="IPR010603">
    <property type="entry name" value="Znf_CppX_C4"/>
</dbReference>
<dbReference type="InterPro" id="IPR038366">
    <property type="entry name" value="Znf_CppX_C4_sf"/>
</dbReference>
<dbReference type="NCBIfam" id="TIGR00382">
    <property type="entry name" value="clpX"/>
    <property type="match status" value="1"/>
</dbReference>
<dbReference type="NCBIfam" id="NF003745">
    <property type="entry name" value="PRK05342.1"/>
    <property type="match status" value="1"/>
</dbReference>
<dbReference type="PANTHER" id="PTHR48102:SF7">
    <property type="entry name" value="ATP-DEPENDENT CLP PROTEASE ATP-BINDING SUBUNIT CLPX-LIKE, MITOCHONDRIAL"/>
    <property type="match status" value="1"/>
</dbReference>
<dbReference type="PANTHER" id="PTHR48102">
    <property type="entry name" value="ATP-DEPENDENT CLP PROTEASE ATP-BINDING SUBUNIT CLPX-LIKE, MITOCHONDRIAL-RELATED"/>
    <property type="match status" value="1"/>
</dbReference>
<dbReference type="Pfam" id="PF07724">
    <property type="entry name" value="AAA_2"/>
    <property type="match status" value="1"/>
</dbReference>
<dbReference type="Pfam" id="PF10431">
    <property type="entry name" value="ClpB_D2-small"/>
    <property type="match status" value="1"/>
</dbReference>
<dbReference type="Pfam" id="PF06689">
    <property type="entry name" value="zf-C4_ClpX"/>
    <property type="match status" value="1"/>
</dbReference>
<dbReference type="SMART" id="SM00382">
    <property type="entry name" value="AAA"/>
    <property type="match status" value="1"/>
</dbReference>
<dbReference type="SMART" id="SM01086">
    <property type="entry name" value="ClpB_D2-small"/>
    <property type="match status" value="1"/>
</dbReference>
<dbReference type="SMART" id="SM00994">
    <property type="entry name" value="zf-C4_ClpX"/>
    <property type="match status" value="1"/>
</dbReference>
<dbReference type="SUPFAM" id="SSF57716">
    <property type="entry name" value="Glucocorticoid receptor-like (DNA-binding domain)"/>
    <property type="match status" value="1"/>
</dbReference>
<dbReference type="SUPFAM" id="SSF52540">
    <property type="entry name" value="P-loop containing nucleoside triphosphate hydrolases"/>
    <property type="match status" value="1"/>
</dbReference>
<dbReference type="PROSITE" id="PS51902">
    <property type="entry name" value="CLPX_ZB"/>
    <property type="match status" value="1"/>
</dbReference>
<protein>
    <recommendedName>
        <fullName evidence="1">ATP-dependent Clp protease ATP-binding subunit ClpX</fullName>
    </recommendedName>
</protein>
<accession>Q180E8</accession>
<feature type="chain" id="PRO_1000097942" description="ATP-dependent Clp protease ATP-binding subunit ClpX">
    <location>
        <begin position="1"/>
        <end position="416"/>
    </location>
</feature>
<feature type="domain" description="ClpX-type ZB" evidence="2">
    <location>
        <begin position="1"/>
        <end position="53"/>
    </location>
</feature>
<feature type="binding site" evidence="2">
    <location>
        <position position="12"/>
    </location>
    <ligand>
        <name>Zn(2+)</name>
        <dbReference type="ChEBI" id="CHEBI:29105"/>
    </ligand>
</feature>
<feature type="binding site" evidence="2">
    <location>
        <position position="15"/>
    </location>
    <ligand>
        <name>Zn(2+)</name>
        <dbReference type="ChEBI" id="CHEBI:29105"/>
    </ligand>
</feature>
<feature type="binding site" evidence="2">
    <location>
        <position position="34"/>
    </location>
    <ligand>
        <name>Zn(2+)</name>
        <dbReference type="ChEBI" id="CHEBI:29105"/>
    </ligand>
</feature>
<feature type="binding site" evidence="2">
    <location>
        <position position="37"/>
    </location>
    <ligand>
        <name>Zn(2+)</name>
        <dbReference type="ChEBI" id="CHEBI:29105"/>
    </ligand>
</feature>
<feature type="binding site" evidence="1">
    <location>
        <begin position="117"/>
        <end position="124"/>
    </location>
    <ligand>
        <name>ATP</name>
        <dbReference type="ChEBI" id="CHEBI:30616"/>
    </ligand>
</feature>
<organism>
    <name type="scientific">Clostridioides difficile (strain 630)</name>
    <name type="common">Peptoclostridium difficile</name>
    <dbReference type="NCBI Taxonomy" id="272563"/>
    <lineage>
        <taxon>Bacteria</taxon>
        <taxon>Bacillati</taxon>
        <taxon>Bacillota</taxon>
        <taxon>Clostridia</taxon>
        <taxon>Peptostreptococcales</taxon>
        <taxon>Peptostreptococcaceae</taxon>
        <taxon>Clostridioides</taxon>
    </lineage>
</organism>
<comment type="function">
    <text evidence="1">ATP-dependent specificity component of the Clp protease. It directs the protease to specific substrates. Can perform chaperone functions in the absence of ClpP.</text>
</comment>
<comment type="subunit">
    <text evidence="1">Component of the ClpX-ClpP complex. Forms a hexameric ring that, in the presence of ATP, binds to fourteen ClpP subunits assembled into a disk-like structure with a central cavity, resembling the structure of eukaryotic proteasomes.</text>
</comment>
<comment type="similarity">
    <text evidence="1">Belongs to the ClpX chaperone family.</text>
</comment>
<proteinExistence type="inferred from homology"/>
<gene>
    <name evidence="1" type="primary">clpX</name>
    <name type="ordered locus">CD630_33040</name>
</gene>